<sequence length="107" mass="12278">MPELEKHAFRMKLFAGKEVEYKKRHDEIWPELVALLHEAGVSDYSIHLDPETSILFGVLTRPKVHGMAALPEHPVMKKWWAHMADIMESNPDNSPVAKDLVTVFHLP</sequence>
<protein>
    <recommendedName>
        <fullName evidence="1">L-rhamnose mutarotase</fullName>
        <ecNumber evidence="1">5.1.3.32</ecNumber>
    </recommendedName>
    <alternativeName>
        <fullName evidence="1">Rhamnose 1-epimerase</fullName>
    </alternativeName>
    <alternativeName>
        <fullName evidence="1">Type-3 mutarotase</fullName>
    </alternativeName>
</protein>
<reference key="1">
    <citation type="journal article" date="2001" name="Science">
        <title>Genome sequence of the plant pathogen and biotechnology agent Agrobacterium tumefaciens C58.</title>
        <authorList>
            <person name="Goodner B."/>
            <person name="Hinkle G."/>
            <person name="Gattung S."/>
            <person name="Miller N."/>
            <person name="Blanchard M."/>
            <person name="Qurollo B."/>
            <person name="Goldman B.S."/>
            <person name="Cao Y."/>
            <person name="Askenazi M."/>
            <person name="Halling C."/>
            <person name="Mullin L."/>
            <person name="Houmiel K."/>
            <person name="Gordon J."/>
            <person name="Vaudin M."/>
            <person name="Iartchouk O."/>
            <person name="Epp A."/>
            <person name="Liu F."/>
            <person name="Wollam C."/>
            <person name="Allinger M."/>
            <person name="Doughty D."/>
            <person name="Scott C."/>
            <person name="Lappas C."/>
            <person name="Markelz B."/>
            <person name="Flanagan C."/>
            <person name="Crowell C."/>
            <person name="Gurson J."/>
            <person name="Lomo C."/>
            <person name="Sear C."/>
            <person name="Strub G."/>
            <person name="Cielo C."/>
            <person name="Slater S."/>
        </authorList>
    </citation>
    <scope>NUCLEOTIDE SEQUENCE [LARGE SCALE GENOMIC DNA]</scope>
    <source>
        <strain>C58 / ATCC 33970</strain>
    </source>
</reference>
<reference key="2">
    <citation type="journal article" date="2001" name="Science">
        <title>The genome of the natural genetic engineer Agrobacterium tumefaciens C58.</title>
        <authorList>
            <person name="Wood D.W."/>
            <person name="Setubal J.C."/>
            <person name="Kaul R."/>
            <person name="Monks D.E."/>
            <person name="Kitajima J.P."/>
            <person name="Okura V.K."/>
            <person name="Zhou Y."/>
            <person name="Chen L."/>
            <person name="Wood G.E."/>
            <person name="Almeida N.F. Jr."/>
            <person name="Woo L."/>
            <person name="Chen Y."/>
            <person name="Paulsen I.T."/>
            <person name="Eisen J.A."/>
            <person name="Karp P.D."/>
            <person name="Bovee D. Sr."/>
            <person name="Chapman P."/>
            <person name="Clendenning J."/>
            <person name="Deatherage G."/>
            <person name="Gillet W."/>
            <person name="Grant C."/>
            <person name="Kutyavin T."/>
            <person name="Levy R."/>
            <person name="Li M.-J."/>
            <person name="McClelland E."/>
            <person name="Palmieri A."/>
            <person name="Raymond C."/>
            <person name="Rouse G."/>
            <person name="Saenphimmachak C."/>
            <person name="Wu Z."/>
            <person name="Romero P."/>
            <person name="Gordon D."/>
            <person name="Zhang S."/>
            <person name="Yoo H."/>
            <person name="Tao Y."/>
            <person name="Biddle P."/>
            <person name="Jung M."/>
            <person name="Krespan W."/>
            <person name="Perry M."/>
            <person name="Gordon-Kamm B."/>
            <person name="Liao L."/>
            <person name="Kim S."/>
            <person name="Hendrick C."/>
            <person name="Zhao Z.-Y."/>
            <person name="Dolan M."/>
            <person name="Chumley F."/>
            <person name="Tingey S.V."/>
            <person name="Tomb J.-F."/>
            <person name="Gordon M.P."/>
            <person name="Olson M.V."/>
            <person name="Nester E.W."/>
        </authorList>
    </citation>
    <scope>NUCLEOTIDE SEQUENCE [LARGE SCALE GENOMIC DNA]</scope>
    <source>
        <strain>C58 / ATCC 33970</strain>
    </source>
</reference>
<dbReference type="EC" id="5.1.3.32" evidence="1"/>
<dbReference type="EMBL" id="AE007870">
    <property type="protein sequence ID" value="AAK89903.1"/>
    <property type="molecule type" value="Genomic_DNA"/>
</dbReference>
<dbReference type="PIR" id="AB2986">
    <property type="entry name" value="AB2986"/>
</dbReference>
<dbReference type="PIR" id="E98297">
    <property type="entry name" value="E98297"/>
</dbReference>
<dbReference type="RefSeq" id="NP_357118.1">
    <property type="nucleotide sequence ID" value="NC_003063.2"/>
</dbReference>
<dbReference type="RefSeq" id="WP_010973087.1">
    <property type="nucleotide sequence ID" value="NC_003063.2"/>
</dbReference>
<dbReference type="SMR" id="A9CFA8"/>
<dbReference type="STRING" id="176299.Atu3491"/>
<dbReference type="EnsemblBacteria" id="AAK89903">
    <property type="protein sequence ID" value="AAK89903"/>
    <property type="gene ID" value="Atu3491"/>
</dbReference>
<dbReference type="GeneID" id="1135365"/>
<dbReference type="KEGG" id="atu:Atu3491"/>
<dbReference type="PATRIC" id="fig|176299.10.peg.3330"/>
<dbReference type="eggNOG" id="COG3254">
    <property type="taxonomic scope" value="Bacteria"/>
</dbReference>
<dbReference type="HOGENOM" id="CLU_100689_2_0_5"/>
<dbReference type="OrthoDB" id="9799608at2"/>
<dbReference type="PhylomeDB" id="A9CFA8"/>
<dbReference type="BioCyc" id="AGRO:ATU3491-MONOMER"/>
<dbReference type="UniPathway" id="UPA00125"/>
<dbReference type="Proteomes" id="UP000000813">
    <property type="component" value="Chromosome linear"/>
</dbReference>
<dbReference type="GO" id="GO:0005737">
    <property type="term" value="C:cytoplasm"/>
    <property type="evidence" value="ECO:0007669"/>
    <property type="project" value="UniProtKB-SubCell"/>
</dbReference>
<dbReference type="GO" id="GO:0062192">
    <property type="term" value="F:L-rhamnose mutarotase activity"/>
    <property type="evidence" value="ECO:0007669"/>
    <property type="project" value="UniProtKB-EC"/>
</dbReference>
<dbReference type="GO" id="GO:0019301">
    <property type="term" value="P:rhamnose catabolic process"/>
    <property type="evidence" value="ECO:0007669"/>
    <property type="project" value="TreeGrafter"/>
</dbReference>
<dbReference type="Gene3D" id="3.30.70.100">
    <property type="match status" value="1"/>
</dbReference>
<dbReference type="HAMAP" id="MF_01663">
    <property type="entry name" value="L_rham_rotase"/>
    <property type="match status" value="1"/>
</dbReference>
<dbReference type="InterPro" id="IPR011008">
    <property type="entry name" value="Dimeric_a/b-barrel"/>
</dbReference>
<dbReference type="InterPro" id="IPR013448">
    <property type="entry name" value="L-rhamnose_mutarotase"/>
</dbReference>
<dbReference type="InterPro" id="IPR008000">
    <property type="entry name" value="Rham/fucose_mutarotase"/>
</dbReference>
<dbReference type="NCBIfam" id="TIGR02625">
    <property type="entry name" value="YiiL_rotase"/>
    <property type="match status" value="1"/>
</dbReference>
<dbReference type="PANTHER" id="PTHR34389">
    <property type="entry name" value="L-RHAMNOSE MUTAROTASE"/>
    <property type="match status" value="1"/>
</dbReference>
<dbReference type="PANTHER" id="PTHR34389:SF2">
    <property type="entry name" value="L-RHAMNOSE MUTAROTASE"/>
    <property type="match status" value="1"/>
</dbReference>
<dbReference type="Pfam" id="PF05336">
    <property type="entry name" value="rhaM"/>
    <property type="match status" value="1"/>
</dbReference>
<dbReference type="SUPFAM" id="SSF54909">
    <property type="entry name" value="Dimeric alpha+beta barrel"/>
    <property type="match status" value="1"/>
</dbReference>
<proteinExistence type="inferred from homology"/>
<gene>
    <name evidence="1" type="primary">rhaM</name>
    <name type="ordered locus">Atu3491</name>
    <name type="ORF">AGR_L_2674</name>
</gene>
<organism>
    <name type="scientific">Agrobacterium fabrum (strain C58 / ATCC 33970)</name>
    <name type="common">Agrobacterium tumefaciens (strain C58)</name>
    <dbReference type="NCBI Taxonomy" id="176299"/>
    <lineage>
        <taxon>Bacteria</taxon>
        <taxon>Pseudomonadati</taxon>
        <taxon>Pseudomonadota</taxon>
        <taxon>Alphaproteobacteria</taxon>
        <taxon>Hyphomicrobiales</taxon>
        <taxon>Rhizobiaceae</taxon>
        <taxon>Rhizobium/Agrobacterium group</taxon>
        <taxon>Agrobacterium</taxon>
        <taxon>Agrobacterium tumefaciens complex</taxon>
    </lineage>
</organism>
<feature type="chain" id="PRO_0000344550" description="L-rhamnose mutarotase">
    <location>
        <begin position="1"/>
        <end position="107"/>
    </location>
</feature>
<feature type="active site" description="Proton donor" evidence="1">
    <location>
        <position position="25"/>
    </location>
</feature>
<feature type="binding site" evidence="1">
    <location>
        <position position="21"/>
    </location>
    <ligand>
        <name>substrate</name>
    </ligand>
</feature>
<feature type="binding site" evidence="1">
    <location>
        <position position="44"/>
    </location>
    <ligand>
        <name>substrate</name>
    </ligand>
</feature>
<feature type="binding site" evidence="1">
    <location>
        <begin position="79"/>
        <end position="80"/>
    </location>
    <ligand>
        <name>substrate</name>
    </ligand>
</feature>
<accession>A9CFA8</accession>
<name>RHAM_AGRFC</name>
<keyword id="KW-0119">Carbohydrate metabolism</keyword>
<keyword id="KW-0963">Cytoplasm</keyword>
<keyword id="KW-0413">Isomerase</keyword>
<keyword id="KW-1185">Reference proteome</keyword>
<keyword id="KW-0684">Rhamnose metabolism</keyword>
<evidence type="ECO:0000255" key="1">
    <source>
        <dbReference type="HAMAP-Rule" id="MF_01663"/>
    </source>
</evidence>
<comment type="function">
    <text evidence="1">Involved in the anomeric conversion of L-rhamnose.</text>
</comment>
<comment type="catalytic activity">
    <reaction evidence="1">
        <text>alpha-L-rhamnose = beta-L-rhamnose</text>
        <dbReference type="Rhea" id="RHEA:25584"/>
        <dbReference type="ChEBI" id="CHEBI:27586"/>
        <dbReference type="ChEBI" id="CHEBI:27907"/>
        <dbReference type="EC" id="5.1.3.32"/>
    </reaction>
</comment>
<comment type="pathway">
    <text evidence="1">Carbohydrate metabolism; L-rhamnose metabolism.</text>
</comment>
<comment type="subunit">
    <text evidence="1">Homodimer.</text>
</comment>
<comment type="subcellular location">
    <subcellularLocation>
        <location evidence="1">Cytoplasm</location>
    </subcellularLocation>
</comment>
<comment type="similarity">
    <text evidence="1">Belongs to the rhamnose mutarotase family.</text>
</comment>